<sequence>MTTTEFPSAIAKARFVRVSPRKARRVIDLVRGRSVADALDILRWAPQAASEPVARVIASAAANAQNNNGLDPETLVVATVYAGEGPTAKRIRPRAQGRAFRIRRRTSHITVVVESRPVKDQRSAASTKARRAEASKTAGRAPAKKAGASSGATKMPPKKASVKTSEASETKGGSD</sequence>
<proteinExistence type="inferred from homology"/>
<accession>O32986</accession>
<keyword id="KW-1185">Reference proteome</keyword>
<keyword id="KW-0687">Ribonucleoprotein</keyword>
<keyword id="KW-0689">Ribosomal protein</keyword>
<keyword id="KW-0694">RNA-binding</keyword>
<keyword id="KW-0699">rRNA-binding</keyword>
<comment type="function">
    <text evidence="1">This protein binds specifically to 23S rRNA; its binding is stimulated by other ribosomal proteins, e.g. L4, L17, and L20. It is important during the early stages of 50S assembly. It makes multiple contacts with different domains of the 23S rRNA in the assembled 50S subunit and ribosome (By similarity).</text>
</comment>
<comment type="function">
    <text evidence="1">The globular domain of the protein is located near the polypeptide exit tunnel on the outside of the subunit, while an extended beta-hairpin is found that lines the wall of the exit tunnel in the center of the 70S ribosome.</text>
</comment>
<comment type="subunit">
    <text evidence="1">Part of the 50S ribosomal subunit.</text>
</comment>
<comment type="similarity">
    <text evidence="1">Belongs to the universal ribosomal protein uL22 family.</text>
</comment>
<organism>
    <name type="scientific">Mycobacterium leprae (strain TN)</name>
    <dbReference type="NCBI Taxonomy" id="272631"/>
    <lineage>
        <taxon>Bacteria</taxon>
        <taxon>Bacillati</taxon>
        <taxon>Actinomycetota</taxon>
        <taxon>Actinomycetes</taxon>
        <taxon>Mycobacteriales</taxon>
        <taxon>Mycobacteriaceae</taxon>
        <taxon>Mycobacterium</taxon>
    </lineage>
</organism>
<reference key="1">
    <citation type="journal article" date="2001" name="Nature">
        <title>Massive gene decay in the leprosy bacillus.</title>
        <authorList>
            <person name="Cole S.T."/>
            <person name="Eiglmeier K."/>
            <person name="Parkhill J."/>
            <person name="James K.D."/>
            <person name="Thomson N.R."/>
            <person name="Wheeler P.R."/>
            <person name="Honore N."/>
            <person name="Garnier T."/>
            <person name="Churcher C.M."/>
            <person name="Harris D.E."/>
            <person name="Mungall K.L."/>
            <person name="Basham D."/>
            <person name="Brown D."/>
            <person name="Chillingworth T."/>
            <person name="Connor R."/>
            <person name="Davies R.M."/>
            <person name="Devlin K."/>
            <person name="Duthoy S."/>
            <person name="Feltwell T."/>
            <person name="Fraser A."/>
            <person name="Hamlin N."/>
            <person name="Holroyd S."/>
            <person name="Hornsby T."/>
            <person name="Jagels K."/>
            <person name="Lacroix C."/>
            <person name="Maclean J."/>
            <person name="Moule S."/>
            <person name="Murphy L.D."/>
            <person name="Oliver K."/>
            <person name="Quail M.A."/>
            <person name="Rajandream M.A."/>
            <person name="Rutherford K.M."/>
            <person name="Rutter S."/>
            <person name="Seeger K."/>
            <person name="Simon S."/>
            <person name="Simmonds M."/>
            <person name="Skelton J."/>
            <person name="Squares R."/>
            <person name="Squares S."/>
            <person name="Stevens K."/>
            <person name="Taylor K."/>
            <person name="Whitehead S."/>
            <person name="Woodward J.R."/>
            <person name="Barrell B.G."/>
        </authorList>
    </citation>
    <scope>NUCLEOTIDE SEQUENCE [LARGE SCALE GENOMIC DNA]</scope>
    <source>
        <strain>TN</strain>
    </source>
</reference>
<dbReference type="EMBL" id="Z98756">
    <property type="protein sequence ID" value="CAB11439.1"/>
    <property type="molecule type" value="Genomic_DNA"/>
</dbReference>
<dbReference type="EMBL" id="AL583923">
    <property type="protein sequence ID" value="CAC30812.1"/>
    <property type="molecule type" value="Genomic_DNA"/>
</dbReference>
<dbReference type="PIR" id="T45369">
    <property type="entry name" value="T45369"/>
</dbReference>
<dbReference type="RefSeq" id="NP_302260.1">
    <property type="nucleotide sequence ID" value="NC_002677.1"/>
</dbReference>
<dbReference type="RefSeq" id="WP_010908581.1">
    <property type="nucleotide sequence ID" value="NC_002677.1"/>
</dbReference>
<dbReference type="SMR" id="O32986"/>
<dbReference type="STRING" id="272631.gene:17575706"/>
<dbReference type="KEGG" id="mle:ML1858"/>
<dbReference type="PATRIC" id="fig|272631.5.peg.3519"/>
<dbReference type="Leproma" id="ML1858"/>
<dbReference type="eggNOG" id="COG0091">
    <property type="taxonomic scope" value="Bacteria"/>
</dbReference>
<dbReference type="HOGENOM" id="CLU_083987_1_0_11"/>
<dbReference type="OrthoDB" id="9805969at2"/>
<dbReference type="Proteomes" id="UP000000806">
    <property type="component" value="Chromosome"/>
</dbReference>
<dbReference type="GO" id="GO:0022625">
    <property type="term" value="C:cytosolic large ribosomal subunit"/>
    <property type="evidence" value="ECO:0007669"/>
    <property type="project" value="TreeGrafter"/>
</dbReference>
<dbReference type="GO" id="GO:0019843">
    <property type="term" value="F:rRNA binding"/>
    <property type="evidence" value="ECO:0007669"/>
    <property type="project" value="UniProtKB-UniRule"/>
</dbReference>
<dbReference type="GO" id="GO:0003735">
    <property type="term" value="F:structural constituent of ribosome"/>
    <property type="evidence" value="ECO:0007669"/>
    <property type="project" value="InterPro"/>
</dbReference>
<dbReference type="GO" id="GO:0006412">
    <property type="term" value="P:translation"/>
    <property type="evidence" value="ECO:0007669"/>
    <property type="project" value="UniProtKB-UniRule"/>
</dbReference>
<dbReference type="CDD" id="cd00336">
    <property type="entry name" value="Ribosomal_L22"/>
    <property type="match status" value="1"/>
</dbReference>
<dbReference type="FunFam" id="3.90.470.10:FF:000002">
    <property type="entry name" value="50S ribosomal protein L22"/>
    <property type="match status" value="1"/>
</dbReference>
<dbReference type="Gene3D" id="3.90.470.10">
    <property type="entry name" value="Ribosomal protein L22/L17"/>
    <property type="match status" value="1"/>
</dbReference>
<dbReference type="HAMAP" id="MF_01331_B">
    <property type="entry name" value="Ribosomal_uL22_B"/>
    <property type="match status" value="1"/>
</dbReference>
<dbReference type="InterPro" id="IPR001063">
    <property type="entry name" value="Ribosomal_uL22"/>
</dbReference>
<dbReference type="InterPro" id="IPR005727">
    <property type="entry name" value="Ribosomal_uL22_bac/chlpt-type"/>
</dbReference>
<dbReference type="InterPro" id="IPR047867">
    <property type="entry name" value="Ribosomal_uL22_bac/org-type"/>
</dbReference>
<dbReference type="InterPro" id="IPR018260">
    <property type="entry name" value="Ribosomal_uL22_CS"/>
</dbReference>
<dbReference type="InterPro" id="IPR036394">
    <property type="entry name" value="Ribosomal_uL22_sf"/>
</dbReference>
<dbReference type="NCBIfam" id="TIGR01044">
    <property type="entry name" value="rplV_bact"/>
    <property type="match status" value="1"/>
</dbReference>
<dbReference type="PANTHER" id="PTHR13501">
    <property type="entry name" value="CHLOROPLAST 50S RIBOSOMAL PROTEIN L22-RELATED"/>
    <property type="match status" value="1"/>
</dbReference>
<dbReference type="PANTHER" id="PTHR13501:SF8">
    <property type="entry name" value="LARGE RIBOSOMAL SUBUNIT PROTEIN UL22M"/>
    <property type="match status" value="1"/>
</dbReference>
<dbReference type="Pfam" id="PF00237">
    <property type="entry name" value="Ribosomal_L22"/>
    <property type="match status" value="1"/>
</dbReference>
<dbReference type="SUPFAM" id="SSF54843">
    <property type="entry name" value="Ribosomal protein L22"/>
    <property type="match status" value="1"/>
</dbReference>
<dbReference type="PROSITE" id="PS00464">
    <property type="entry name" value="RIBOSOMAL_L22"/>
    <property type="match status" value="1"/>
</dbReference>
<name>RL22_MYCLE</name>
<feature type="chain" id="PRO_0000125179" description="Large ribosomal subunit protein uL22">
    <location>
        <begin position="1"/>
        <end position="175"/>
    </location>
</feature>
<feature type="region of interest" description="Disordered" evidence="2">
    <location>
        <begin position="113"/>
        <end position="175"/>
    </location>
</feature>
<feature type="compositionally biased region" description="Low complexity" evidence="2">
    <location>
        <begin position="136"/>
        <end position="154"/>
    </location>
</feature>
<feature type="compositionally biased region" description="Basic and acidic residues" evidence="2">
    <location>
        <begin position="166"/>
        <end position="175"/>
    </location>
</feature>
<evidence type="ECO:0000255" key="1">
    <source>
        <dbReference type="HAMAP-Rule" id="MF_01331"/>
    </source>
</evidence>
<evidence type="ECO:0000256" key="2">
    <source>
        <dbReference type="SAM" id="MobiDB-lite"/>
    </source>
</evidence>
<evidence type="ECO:0000305" key="3"/>
<protein>
    <recommendedName>
        <fullName evidence="1">Large ribosomal subunit protein uL22</fullName>
    </recommendedName>
    <alternativeName>
        <fullName evidence="3">50S ribosomal protein L22</fullName>
    </alternativeName>
</protein>
<gene>
    <name evidence="1" type="primary">rplV</name>
    <name type="ordered locus">ML1858</name>
    <name type="ORF">MLCB2492.07</name>
</gene>